<organism>
    <name type="scientific">Corynebacterium diphtheriae (strain ATCC 700971 / NCTC 13129 / Biotype gravis)</name>
    <dbReference type="NCBI Taxonomy" id="257309"/>
    <lineage>
        <taxon>Bacteria</taxon>
        <taxon>Bacillati</taxon>
        <taxon>Actinomycetota</taxon>
        <taxon>Actinomycetes</taxon>
        <taxon>Mycobacteriales</taxon>
        <taxon>Corynebacteriaceae</taxon>
        <taxon>Corynebacterium</taxon>
    </lineage>
</organism>
<gene>
    <name evidence="1" type="primary">rsmA</name>
    <name evidence="1" type="synonym">ksgA</name>
    <name type="ordered locus">DIP0875</name>
</gene>
<sequence length="295" mass="31994">MEDQASAQLLGPVEIRQLAEKLDVTPTKKLGQNFVHDPNTVRMIVSAADLNSDDHVIEVGPGLGSLTLALLDTAQKVTAVEIDPRLAQQLPLTVAERAGQFADRLNLIHKDALTVAPDDIDHPTALVANLPYNVSVPVLLHLLQIFPTIRRVLVMVQAEVADRLAADPGNKVYGVPSVKASFYGNVRRAGSIGKNVFWPAPKIESGLVRIDVFDPEHQPWPVTDDMRKAVFPLIDSAFAQRRKTLRAALSGHFGSGPAAEEALRTAGIDPILRGEKLDIADFVRLARVTAAQEQA</sequence>
<dbReference type="EC" id="2.1.1.182" evidence="1"/>
<dbReference type="EMBL" id="BX248356">
    <property type="protein sequence ID" value="CAE49392.1"/>
    <property type="molecule type" value="Genomic_DNA"/>
</dbReference>
<dbReference type="RefSeq" id="WP_010934630.1">
    <property type="nucleotide sequence ID" value="NC_002935.2"/>
</dbReference>
<dbReference type="SMR" id="Q6NIA2"/>
<dbReference type="STRING" id="257309.DIP0875"/>
<dbReference type="KEGG" id="cdi:DIP0875"/>
<dbReference type="HOGENOM" id="CLU_041220_1_1_11"/>
<dbReference type="Proteomes" id="UP000002198">
    <property type="component" value="Chromosome"/>
</dbReference>
<dbReference type="GO" id="GO:0005829">
    <property type="term" value="C:cytosol"/>
    <property type="evidence" value="ECO:0007669"/>
    <property type="project" value="TreeGrafter"/>
</dbReference>
<dbReference type="GO" id="GO:0052908">
    <property type="term" value="F:16S rRNA (adenine(1518)-N(6)/adenine(1519)-N(6))-dimethyltransferase activity"/>
    <property type="evidence" value="ECO:0007669"/>
    <property type="project" value="UniProtKB-EC"/>
</dbReference>
<dbReference type="GO" id="GO:0003723">
    <property type="term" value="F:RNA binding"/>
    <property type="evidence" value="ECO:0007669"/>
    <property type="project" value="UniProtKB-KW"/>
</dbReference>
<dbReference type="CDD" id="cd02440">
    <property type="entry name" value="AdoMet_MTases"/>
    <property type="match status" value="1"/>
</dbReference>
<dbReference type="FunFam" id="3.40.50.150:FF:000023">
    <property type="entry name" value="Ribosomal RNA small subunit methyltransferase A"/>
    <property type="match status" value="1"/>
</dbReference>
<dbReference type="Gene3D" id="1.10.8.100">
    <property type="entry name" value="Ribosomal RNA adenine dimethylase-like, domain 2"/>
    <property type="match status" value="1"/>
</dbReference>
<dbReference type="Gene3D" id="3.40.50.150">
    <property type="entry name" value="Vaccinia Virus protein VP39"/>
    <property type="match status" value="1"/>
</dbReference>
<dbReference type="HAMAP" id="MF_00607">
    <property type="entry name" value="16SrRNA_methyltr_A"/>
    <property type="match status" value="1"/>
</dbReference>
<dbReference type="InterPro" id="IPR001737">
    <property type="entry name" value="KsgA/Erm"/>
</dbReference>
<dbReference type="InterPro" id="IPR023165">
    <property type="entry name" value="rRNA_Ade_diMease-like_C"/>
</dbReference>
<dbReference type="InterPro" id="IPR020596">
    <property type="entry name" value="rRNA_Ade_Mease_Trfase_CS"/>
</dbReference>
<dbReference type="InterPro" id="IPR020598">
    <property type="entry name" value="rRNA_Ade_methylase_Trfase_N"/>
</dbReference>
<dbReference type="InterPro" id="IPR011530">
    <property type="entry name" value="rRNA_adenine_dimethylase"/>
</dbReference>
<dbReference type="InterPro" id="IPR029063">
    <property type="entry name" value="SAM-dependent_MTases_sf"/>
</dbReference>
<dbReference type="NCBIfam" id="TIGR00755">
    <property type="entry name" value="ksgA"/>
    <property type="match status" value="1"/>
</dbReference>
<dbReference type="PANTHER" id="PTHR11727">
    <property type="entry name" value="DIMETHYLADENOSINE TRANSFERASE"/>
    <property type="match status" value="1"/>
</dbReference>
<dbReference type="PANTHER" id="PTHR11727:SF7">
    <property type="entry name" value="DIMETHYLADENOSINE TRANSFERASE-RELATED"/>
    <property type="match status" value="1"/>
</dbReference>
<dbReference type="Pfam" id="PF00398">
    <property type="entry name" value="RrnaAD"/>
    <property type="match status" value="1"/>
</dbReference>
<dbReference type="SMART" id="SM00650">
    <property type="entry name" value="rADc"/>
    <property type="match status" value="1"/>
</dbReference>
<dbReference type="SUPFAM" id="SSF53335">
    <property type="entry name" value="S-adenosyl-L-methionine-dependent methyltransferases"/>
    <property type="match status" value="1"/>
</dbReference>
<dbReference type="PROSITE" id="PS01131">
    <property type="entry name" value="RRNA_A_DIMETH"/>
    <property type="match status" value="1"/>
</dbReference>
<dbReference type="PROSITE" id="PS51689">
    <property type="entry name" value="SAM_RNA_A_N6_MT"/>
    <property type="match status" value="1"/>
</dbReference>
<name>RSMA_CORDI</name>
<protein>
    <recommendedName>
        <fullName evidence="1">Ribosomal RNA small subunit methyltransferase A</fullName>
        <ecNumber evidence="1">2.1.1.182</ecNumber>
    </recommendedName>
    <alternativeName>
        <fullName evidence="1">16S rRNA (adenine(1518)-N(6)/adenine(1519)-N(6))-dimethyltransferase</fullName>
    </alternativeName>
    <alternativeName>
        <fullName evidence="1">16S rRNA dimethyladenosine transferase</fullName>
    </alternativeName>
    <alternativeName>
        <fullName evidence="1">16S rRNA dimethylase</fullName>
    </alternativeName>
    <alternativeName>
        <fullName evidence="1">S-adenosylmethionine-6-N', N'-adenosyl(rRNA) dimethyltransferase</fullName>
    </alternativeName>
</protein>
<keyword id="KW-0963">Cytoplasm</keyword>
<keyword id="KW-0489">Methyltransferase</keyword>
<keyword id="KW-1185">Reference proteome</keyword>
<keyword id="KW-0694">RNA-binding</keyword>
<keyword id="KW-0698">rRNA processing</keyword>
<keyword id="KW-0949">S-adenosyl-L-methionine</keyword>
<keyword id="KW-0808">Transferase</keyword>
<reference key="1">
    <citation type="journal article" date="2003" name="Nucleic Acids Res.">
        <title>The complete genome sequence and analysis of Corynebacterium diphtheriae NCTC13129.</title>
        <authorList>
            <person name="Cerdeno-Tarraga A.-M."/>
            <person name="Efstratiou A."/>
            <person name="Dover L.G."/>
            <person name="Holden M.T.G."/>
            <person name="Pallen M.J."/>
            <person name="Bentley S.D."/>
            <person name="Besra G.S."/>
            <person name="Churcher C.M."/>
            <person name="James K.D."/>
            <person name="De Zoysa A."/>
            <person name="Chillingworth T."/>
            <person name="Cronin A."/>
            <person name="Dowd L."/>
            <person name="Feltwell T."/>
            <person name="Hamlin N."/>
            <person name="Holroyd S."/>
            <person name="Jagels K."/>
            <person name="Moule S."/>
            <person name="Quail M.A."/>
            <person name="Rabbinowitsch E."/>
            <person name="Rutherford K.M."/>
            <person name="Thomson N.R."/>
            <person name="Unwin L."/>
            <person name="Whitehead S."/>
            <person name="Barrell B.G."/>
            <person name="Parkhill J."/>
        </authorList>
    </citation>
    <scope>NUCLEOTIDE SEQUENCE [LARGE SCALE GENOMIC DNA]</scope>
    <source>
        <strain>ATCC 700971 / NCTC 13129 / Biotype gravis</strain>
    </source>
</reference>
<evidence type="ECO:0000255" key="1">
    <source>
        <dbReference type="HAMAP-Rule" id="MF_00607"/>
    </source>
</evidence>
<proteinExistence type="inferred from homology"/>
<feature type="chain" id="PRO_0000101517" description="Ribosomal RNA small subunit methyltransferase A">
    <location>
        <begin position="1"/>
        <end position="295"/>
    </location>
</feature>
<feature type="binding site" evidence="1">
    <location>
        <position position="33"/>
    </location>
    <ligand>
        <name>S-adenosyl-L-methionine</name>
        <dbReference type="ChEBI" id="CHEBI:59789"/>
    </ligand>
</feature>
<feature type="binding site" evidence="1">
    <location>
        <position position="35"/>
    </location>
    <ligand>
        <name>S-adenosyl-L-methionine</name>
        <dbReference type="ChEBI" id="CHEBI:59789"/>
    </ligand>
</feature>
<feature type="binding site" evidence="1">
    <location>
        <position position="60"/>
    </location>
    <ligand>
        <name>S-adenosyl-L-methionine</name>
        <dbReference type="ChEBI" id="CHEBI:59789"/>
    </ligand>
</feature>
<feature type="binding site" evidence="1">
    <location>
        <position position="81"/>
    </location>
    <ligand>
        <name>S-adenosyl-L-methionine</name>
        <dbReference type="ChEBI" id="CHEBI:59789"/>
    </ligand>
</feature>
<feature type="binding site" evidence="1">
    <location>
        <position position="111"/>
    </location>
    <ligand>
        <name>S-adenosyl-L-methionine</name>
        <dbReference type="ChEBI" id="CHEBI:59789"/>
    </ligand>
</feature>
<feature type="binding site" evidence="1">
    <location>
        <position position="129"/>
    </location>
    <ligand>
        <name>S-adenosyl-L-methionine</name>
        <dbReference type="ChEBI" id="CHEBI:59789"/>
    </ligand>
</feature>
<accession>Q6NIA2</accession>
<comment type="function">
    <text evidence="1">Specifically dimethylates two adjacent adenosines (A1518 and A1519) in the loop of a conserved hairpin near the 3'-end of 16S rRNA in the 30S particle. May play a critical role in biogenesis of 30S subunits.</text>
</comment>
<comment type="catalytic activity">
    <reaction evidence="1">
        <text>adenosine(1518)/adenosine(1519) in 16S rRNA + 4 S-adenosyl-L-methionine = N(6)-dimethyladenosine(1518)/N(6)-dimethyladenosine(1519) in 16S rRNA + 4 S-adenosyl-L-homocysteine + 4 H(+)</text>
        <dbReference type="Rhea" id="RHEA:19609"/>
        <dbReference type="Rhea" id="RHEA-COMP:10232"/>
        <dbReference type="Rhea" id="RHEA-COMP:10233"/>
        <dbReference type="ChEBI" id="CHEBI:15378"/>
        <dbReference type="ChEBI" id="CHEBI:57856"/>
        <dbReference type="ChEBI" id="CHEBI:59789"/>
        <dbReference type="ChEBI" id="CHEBI:74411"/>
        <dbReference type="ChEBI" id="CHEBI:74493"/>
        <dbReference type="EC" id="2.1.1.182"/>
    </reaction>
</comment>
<comment type="subcellular location">
    <subcellularLocation>
        <location evidence="1">Cytoplasm</location>
    </subcellularLocation>
</comment>
<comment type="similarity">
    <text evidence="1">Belongs to the class I-like SAM-binding methyltransferase superfamily. rRNA adenine N(6)-methyltransferase family. RsmA subfamily.</text>
</comment>